<gene>
    <name evidence="11" type="primary">PE25</name>
    <name evidence="11" type="ordered locus">Rv2431c</name>
</gene>
<accession>I6X486</accession>
<organism>
    <name type="scientific">Mycobacterium tuberculosis (strain ATCC 25618 / H37Rv)</name>
    <dbReference type="NCBI Taxonomy" id="83332"/>
    <lineage>
        <taxon>Bacteria</taxon>
        <taxon>Bacillati</taxon>
        <taxon>Actinomycetota</taxon>
        <taxon>Actinomycetes</taxon>
        <taxon>Mycobacteriales</taxon>
        <taxon>Mycobacteriaceae</taxon>
        <taxon>Mycobacterium</taxon>
        <taxon>Mycobacterium tuberculosis complex</taxon>
    </lineage>
</organism>
<sequence>MSFVITNPEALTVAATEVRRIRDRAIQSDAQVAPMTTAVRPPAADLVSEKAATFLVEYARKYRQTIAAAAVVLEEFAHALTTGADKYATAEADNIKTFS</sequence>
<reference key="1">
    <citation type="journal article" date="1998" name="Nature">
        <title>Deciphering the biology of Mycobacterium tuberculosis from the complete genome sequence.</title>
        <authorList>
            <person name="Cole S.T."/>
            <person name="Brosch R."/>
            <person name="Parkhill J."/>
            <person name="Garnier T."/>
            <person name="Churcher C.M."/>
            <person name="Harris D.E."/>
            <person name="Gordon S.V."/>
            <person name="Eiglmeier K."/>
            <person name="Gas S."/>
            <person name="Barry C.E. III"/>
            <person name="Tekaia F."/>
            <person name="Badcock K."/>
            <person name="Basham D."/>
            <person name="Brown D."/>
            <person name="Chillingworth T."/>
            <person name="Connor R."/>
            <person name="Davies R.M."/>
            <person name="Devlin K."/>
            <person name="Feltwell T."/>
            <person name="Gentles S."/>
            <person name="Hamlin N."/>
            <person name="Holroyd S."/>
            <person name="Hornsby T."/>
            <person name="Jagels K."/>
            <person name="Krogh A."/>
            <person name="McLean J."/>
            <person name="Moule S."/>
            <person name="Murphy L.D."/>
            <person name="Oliver S."/>
            <person name="Osborne J."/>
            <person name="Quail M.A."/>
            <person name="Rajandream M.A."/>
            <person name="Rogers J."/>
            <person name="Rutter S."/>
            <person name="Seeger K."/>
            <person name="Skelton S."/>
            <person name="Squares S."/>
            <person name="Squares R."/>
            <person name="Sulston J.E."/>
            <person name="Taylor K."/>
            <person name="Whitehead S."/>
            <person name="Barrell B.G."/>
        </authorList>
    </citation>
    <scope>NUCLEOTIDE SEQUENCE [LARGE SCALE GENOMIC DNA]</scope>
    <source>
        <strain>ATCC 25618 / H37Rv</strain>
    </source>
</reference>
<reference key="2">
    <citation type="journal article" date="2008" name="PLoS ONE">
        <title>The co-operonic PE25/PPE41 protein complex of Mycobacterium tuberculosis elicits increased humoral and cell mediated immune response.</title>
        <authorList>
            <person name="Tundup S."/>
            <person name="Pathak N."/>
            <person name="Ramanadham M."/>
            <person name="Mukhopadhyay S."/>
            <person name="Murthy K.J."/>
            <person name="Ehtesham N.Z."/>
            <person name="Hasnain S.E."/>
        </authorList>
    </citation>
    <scope>FUNCTION</scope>
</reference>
<reference key="3">
    <citation type="journal article" date="2011" name="Mol. Cell. Proteomics">
        <title>Proteogenomic analysis of Mycobacterium tuberculosis by high resolution mass spectrometry.</title>
        <authorList>
            <person name="Kelkar D.S."/>
            <person name="Kumar D."/>
            <person name="Kumar P."/>
            <person name="Balakrishnan L."/>
            <person name="Muthusamy B."/>
            <person name="Yadav A.K."/>
            <person name="Shrivastava P."/>
            <person name="Marimuthu A."/>
            <person name="Anand S."/>
            <person name="Sundaram H."/>
            <person name="Kingsbury R."/>
            <person name="Harsha H.C."/>
            <person name="Nair B."/>
            <person name="Prasad T.S."/>
            <person name="Chauhan D.S."/>
            <person name="Katoch K."/>
            <person name="Katoch V.M."/>
            <person name="Kumar P."/>
            <person name="Chaerkady R."/>
            <person name="Ramachandran S."/>
            <person name="Dash D."/>
            <person name="Pandey A."/>
        </authorList>
    </citation>
    <scope>ACETYLATION [LARGE SCALE ANALYSIS] AT SER-2</scope>
    <scope>CLEAVAGE OF INITIATOR METHIONINE [LARGE SCALE ANALYSIS]</scope>
    <scope>IDENTIFICATION BY MASS SPECTROMETRY [LARGE SCALE ANALYSIS]</scope>
    <source>
        <strain>ATCC 25618 / H37Rv</strain>
    </source>
</reference>
<reference key="4">
    <citation type="journal article" date="2014" name="FEBS Open Bio">
        <title>Mycobacterium tuberculosis PE25/PPE41 protein complex induces necrosis in macrophages: Role in virulence and disease reactivation?</title>
        <authorList>
            <person name="Tundup S."/>
            <person name="Mohareer K."/>
            <person name="Hasnain S.E."/>
        </authorList>
    </citation>
    <scope>FUNCTION</scope>
</reference>
<reference key="5">
    <citation type="journal article" date="2016" name="Med. Microbiol. Immunol.">
        <title>Mycobacterium tuberculosis PE25/PPE41 protein complex induces activation and maturation of dendritic cells and drives Th2-biased immune responses.</title>
        <authorList>
            <person name="Chen W."/>
            <person name="Bao Y."/>
            <person name="Chen X."/>
            <person name="Burton J."/>
            <person name="Gong X."/>
            <person name="Gu D."/>
            <person name="Mi Y."/>
            <person name="Bao L."/>
        </authorList>
    </citation>
    <scope>FUNCTION</scope>
    <source>
        <strain>H37Rv</strain>
    </source>
</reference>
<reference key="6">
    <citation type="journal article" date="2020" name="Science">
        <title>PE/PPE proteins mediate nutrient transport across the outer membrane of Mycobacterium tuberculosis.</title>
        <authorList>
            <person name="Wang Q."/>
            <person name="Boshoff H.I.M."/>
            <person name="Harrison J.R."/>
            <person name="Ray P.C."/>
            <person name="Green S.R."/>
            <person name="Wyatt P.G."/>
            <person name="Barry C.E. III"/>
        </authorList>
    </citation>
    <scope>INTERACTION WITH PPE51</scope>
    <source>
        <strain evidence="9">ATCC 27294 / TMC 102 / H37Rv</strain>
    </source>
</reference>
<reference evidence="12" key="7">
    <citation type="journal article" date="2006" name="Proc. Natl. Acad. Sci. U.S.A.">
        <title>Toward the structural genomics of complexes: crystal structure of a PE/PPE protein complex from Mycobacterium tuberculosis.</title>
        <authorList>
            <person name="Strong M."/>
            <person name="Sawaya M.R."/>
            <person name="Wang S."/>
            <person name="Phillips M."/>
            <person name="Cascio D."/>
            <person name="Eisenberg D."/>
        </authorList>
    </citation>
    <scope>X-RAY CRYSTALLOGRAPHY (2.20 ANGSTROMS) IN COMPLEX WITH PPE41</scope>
    <scope>SUBUNIT</scope>
    <source>
        <strain>H37Rv</strain>
    </source>
</reference>
<reference evidence="13" key="8">
    <citation type="journal article" date="2014" name="Mol. Microbiol.">
        <title>Structure of the Mycobacterium tuberculosis type VII secretion system chaperone EspG5 in complex with PE25-PPE41 dimer.</title>
        <authorList>
            <person name="Korotkova N."/>
            <person name="Freire D."/>
            <person name="Phan T.H."/>
            <person name="Ummels R."/>
            <person name="Creekmore C.C."/>
            <person name="Evans T.J."/>
            <person name="Wilmanns M."/>
            <person name="Bitter W."/>
            <person name="Parret A.H."/>
            <person name="Houben E.N."/>
            <person name="Korotkov K.V."/>
        </authorList>
    </citation>
    <scope>X-RAY CRYSTALLOGRAPHY (2.60 ANGSTROMS) IN COMPLEX WITH PPE41 AND ESPG5</scope>
    <scope>SUBUNIT</scope>
</reference>
<reference evidence="14 15" key="9">
    <citation type="journal article" date="2014" name="Proc. Natl. Acad. Sci. U.S.A.">
        <title>Structure of a PE-PPE-EspG complex from Mycobacterium tuberculosis reveals molecular specificity of ESX protein secretion.</title>
        <authorList>
            <person name="Ekiert D.C."/>
            <person name="Cox J.S."/>
        </authorList>
    </citation>
    <scope>X-RAY CRYSTALLOGRAPHY (2.85 ANGSTROMS) IN COMPLEX WITH PPE41 AND IN COMPLEX WITH PPE41 AND ESPG5</scope>
    <scope>SUBUNIT</scope>
    <source>
        <strain>ATCC 35801 / TMC 107 / Erdman</strain>
    </source>
</reference>
<feature type="initiator methionine" description="Removed" evidence="16">
    <location>
        <position position="1"/>
    </location>
</feature>
<feature type="chain" id="PRO_0000435110" description="PE-PGRS family protein PE25">
    <location>
        <begin position="2"/>
        <end position="99"/>
    </location>
</feature>
<feature type="domain" description="PE" evidence="1">
    <location>
        <begin position="1"/>
        <end position="92"/>
    </location>
</feature>
<feature type="modified residue" description="N-acetylserine" evidence="16">
    <location>
        <position position="2"/>
    </location>
</feature>
<feature type="helix" evidence="17">
    <location>
        <begin position="8"/>
        <end position="36"/>
    </location>
</feature>
<feature type="strand" evidence="17">
    <location>
        <begin position="42"/>
        <end position="45"/>
    </location>
</feature>
<feature type="helix" evidence="17">
    <location>
        <begin position="46"/>
        <end position="84"/>
    </location>
</feature>
<feature type="turn" evidence="17">
    <location>
        <begin position="85"/>
        <end position="87"/>
    </location>
</feature>
<evidence type="ECO:0000255" key="1"/>
<evidence type="ECO:0000269" key="2">
    <source>
    </source>
</evidence>
<evidence type="ECO:0000269" key="3">
    <source>
    </source>
</evidence>
<evidence type="ECO:0000269" key="4">
    <source>
    </source>
</evidence>
<evidence type="ECO:0000269" key="5">
    <source>
    </source>
</evidence>
<evidence type="ECO:0000269" key="6">
    <source>
    </source>
</evidence>
<evidence type="ECO:0000269" key="7">
    <source>
    </source>
</evidence>
<evidence type="ECO:0000269" key="8">
    <source>
    </source>
</evidence>
<evidence type="ECO:0000303" key="9">
    <source>
    </source>
</evidence>
<evidence type="ECO:0000305" key="10"/>
<evidence type="ECO:0000312" key="11">
    <source>
        <dbReference type="EMBL" id="CCP45223.1"/>
    </source>
</evidence>
<evidence type="ECO:0007744" key="12">
    <source>
        <dbReference type="PDB" id="2G38"/>
    </source>
</evidence>
<evidence type="ECO:0007744" key="13">
    <source>
        <dbReference type="PDB" id="4KXR"/>
    </source>
</evidence>
<evidence type="ECO:0007744" key="14">
    <source>
        <dbReference type="PDB" id="4W4K"/>
    </source>
</evidence>
<evidence type="ECO:0007744" key="15">
    <source>
        <dbReference type="PDB" id="4W4L"/>
    </source>
</evidence>
<evidence type="ECO:0007744" key="16">
    <source>
    </source>
</evidence>
<evidence type="ECO:0007829" key="17">
    <source>
        <dbReference type="PDB" id="6VJ5"/>
    </source>
</evidence>
<protein>
    <recommendedName>
        <fullName evidence="10">PE-PGRS family protein PE25</fullName>
    </recommendedName>
</protein>
<keyword id="KW-0002">3D-structure</keyword>
<keyword id="KW-0007">Acetylation</keyword>
<keyword id="KW-1185">Reference proteome</keyword>
<keyword id="KW-0964">Secreted</keyword>
<keyword id="KW-0843">Virulence</keyword>
<name>PE25_MYCTU</name>
<dbReference type="EMBL" id="AL123456">
    <property type="protein sequence ID" value="CCP45223.1"/>
    <property type="molecule type" value="Genomic_DNA"/>
</dbReference>
<dbReference type="RefSeq" id="WP_003412551.1">
    <property type="nucleotide sequence ID" value="NZ_NVQJ01000024.1"/>
</dbReference>
<dbReference type="RefSeq" id="YP_177882.1">
    <property type="nucleotide sequence ID" value="NC_000962.3"/>
</dbReference>
<dbReference type="PDB" id="2G38">
    <property type="method" value="X-ray"/>
    <property type="resolution" value="2.20 A"/>
    <property type="chains" value="A/C=1-99"/>
</dbReference>
<dbReference type="PDB" id="4KXR">
    <property type="method" value="X-ray"/>
    <property type="resolution" value="2.60 A"/>
    <property type="chains" value="A=1-99"/>
</dbReference>
<dbReference type="PDB" id="4W4K">
    <property type="method" value="X-ray"/>
    <property type="resolution" value="1.95 A"/>
    <property type="chains" value="A/C=6-99"/>
</dbReference>
<dbReference type="PDB" id="4W4L">
    <property type="method" value="X-ray"/>
    <property type="resolution" value="2.45 A"/>
    <property type="chains" value="A=1-99"/>
</dbReference>
<dbReference type="PDB" id="6VJ5">
    <property type="method" value="X-ray"/>
    <property type="resolution" value="2.40 A"/>
    <property type="chains" value="A=1-99"/>
</dbReference>
<dbReference type="PDBsum" id="2G38"/>
<dbReference type="PDBsum" id="4KXR"/>
<dbReference type="PDBsum" id="4W4K"/>
<dbReference type="PDBsum" id="4W4L"/>
<dbReference type="PDBsum" id="6VJ5"/>
<dbReference type="SMR" id="I6X486"/>
<dbReference type="DIP" id="DIP-61169N"/>
<dbReference type="FunCoup" id="I6X486">
    <property type="interactions" value="1"/>
</dbReference>
<dbReference type="IntAct" id="I6X486">
    <property type="interactions" value="1"/>
</dbReference>
<dbReference type="STRING" id="83332.Rv2431c"/>
<dbReference type="iPTMnet" id="I6X486"/>
<dbReference type="PaxDb" id="83332-Rv2431c"/>
<dbReference type="DNASU" id="885703"/>
<dbReference type="GeneID" id="885703"/>
<dbReference type="KEGG" id="mtu:Rv2431c"/>
<dbReference type="KEGG" id="mtv:RVBD_2431c"/>
<dbReference type="PATRIC" id="fig|83332.111.peg.2718"/>
<dbReference type="TubercuList" id="Rv2431c"/>
<dbReference type="HOGENOM" id="CLU_000167_16_11_11"/>
<dbReference type="InParanoid" id="I6X486"/>
<dbReference type="OrthoDB" id="4764589at2"/>
<dbReference type="PhylomeDB" id="I6X486"/>
<dbReference type="EvolutionaryTrace" id="I6X486"/>
<dbReference type="Proteomes" id="UP000001584">
    <property type="component" value="Chromosome"/>
</dbReference>
<dbReference type="GO" id="GO:0005576">
    <property type="term" value="C:extracellular region"/>
    <property type="evidence" value="ECO:0007669"/>
    <property type="project" value="UniProtKB-SubCell"/>
</dbReference>
<dbReference type="GO" id="GO:0046982">
    <property type="term" value="F:protein heterodimerization activity"/>
    <property type="evidence" value="ECO:0000314"/>
    <property type="project" value="UniProtKB"/>
</dbReference>
<dbReference type="GO" id="GO:0070208">
    <property type="term" value="P:protein heterotrimerization"/>
    <property type="evidence" value="ECO:0000353"/>
    <property type="project" value="UniProtKB"/>
</dbReference>
<dbReference type="Gene3D" id="1.10.287.850">
    <property type="entry name" value="HP0062-like domain"/>
    <property type="match status" value="1"/>
</dbReference>
<dbReference type="InterPro" id="IPR000084">
    <property type="entry name" value="PE-PGRS_N"/>
</dbReference>
<dbReference type="Pfam" id="PF00934">
    <property type="entry name" value="PE"/>
    <property type="match status" value="1"/>
</dbReference>
<dbReference type="SUPFAM" id="SSF140459">
    <property type="entry name" value="PE/PPE dimer-like"/>
    <property type="match status" value="1"/>
</dbReference>
<comment type="function">
    <text evidence="3 6 7">The PE25/PPE41 dimer induces both a strong humoral and cellular immune response. PE25 protein alone induces low response (PubMed:18974870). The dimer induces necrosis, but not apoptosis, in mouse macrophage cells (PubMed:25379378). It also induces activation and maturation of mouse dendritic cells and drives Th2-biased immune responses (PubMed:26318856).</text>
</comment>
<comment type="subunit">
    <text evidence="2 4 5 8">Forms a heterodimer with PPE41. The dimer forms a 1:1:1 heterotrimeric complex with EspG5 (PubMed:16690741, PubMed:25155747, PubMed:25275011). Interacts with PPE51 (PubMed:32139546).</text>
</comment>
<comment type="interaction">
    <interactant intactId="EBI-15582196">
        <id>I6X486</id>
    </interactant>
    <interactant intactId="EBI-8063017">
        <id>Q79FE1</id>
        <label>PPE41</label>
    </interactant>
    <organismsDiffer>false</organismsDiffer>
    <experiments>3</experiments>
</comment>
<comment type="subcellular location">
    <subcellularLocation>
        <location evidence="10">Secreted</location>
    </subcellularLocation>
    <text evidence="10">Secreted via the ESX-5 / type VII secretion system (T7SS).</text>
</comment>
<comment type="similarity">
    <text evidence="10">Belongs to the mycobacterial PE family.</text>
</comment>
<proteinExistence type="evidence at protein level"/>